<dbReference type="EMBL" id="CP001056">
    <property type="protein sequence ID" value="ACD24358.1"/>
    <property type="molecule type" value="Genomic_DNA"/>
</dbReference>
<dbReference type="SMR" id="B2TIH6"/>
<dbReference type="KEGG" id="cbk:CLL_A0239"/>
<dbReference type="PATRIC" id="fig|935198.13.peg.214"/>
<dbReference type="HOGENOM" id="CLU_041575_5_2_9"/>
<dbReference type="Proteomes" id="UP000001195">
    <property type="component" value="Chromosome"/>
</dbReference>
<dbReference type="GO" id="GO:1990904">
    <property type="term" value="C:ribonucleoprotein complex"/>
    <property type="evidence" value="ECO:0007669"/>
    <property type="project" value="UniProtKB-KW"/>
</dbReference>
<dbReference type="GO" id="GO:0005840">
    <property type="term" value="C:ribosome"/>
    <property type="evidence" value="ECO:0007669"/>
    <property type="project" value="UniProtKB-KW"/>
</dbReference>
<dbReference type="GO" id="GO:0019843">
    <property type="term" value="F:rRNA binding"/>
    <property type="evidence" value="ECO:0007669"/>
    <property type="project" value="UniProtKB-UniRule"/>
</dbReference>
<dbReference type="GO" id="GO:0003735">
    <property type="term" value="F:structural constituent of ribosome"/>
    <property type="evidence" value="ECO:0007669"/>
    <property type="project" value="InterPro"/>
</dbReference>
<dbReference type="GO" id="GO:0006412">
    <property type="term" value="P:translation"/>
    <property type="evidence" value="ECO:0007669"/>
    <property type="project" value="UniProtKB-UniRule"/>
</dbReference>
<dbReference type="Gene3D" id="3.40.1370.10">
    <property type="match status" value="1"/>
</dbReference>
<dbReference type="HAMAP" id="MF_01328_B">
    <property type="entry name" value="Ribosomal_uL4_B"/>
    <property type="match status" value="1"/>
</dbReference>
<dbReference type="InterPro" id="IPR002136">
    <property type="entry name" value="Ribosomal_uL4"/>
</dbReference>
<dbReference type="InterPro" id="IPR013005">
    <property type="entry name" value="Ribosomal_uL4-like"/>
</dbReference>
<dbReference type="InterPro" id="IPR023574">
    <property type="entry name" value="Ribosomal_uL4_dom_sf"/>
</dbReference>
<dbReference type="NCBIfam" id="TIGR03953">
    <property type="entry name" value="rplD_bact"/>
    <property type="match status" value="1"/>
</dbReference>
<dbReference type="PANTHER" id="PTHR10746">
    <property type="entry name" value="50S RIBOSOMAL PROTEIN L4"/>
    <property type="match status" value="1"/>
</dbReference>
<dbReference type="PANTHER" id="PTHR10746:SF6">
    <property type="entry name" value="LARGE RIBOSOMAL SUBUNIT PROTEIN UL4M"/>
    <property type="match status" value="1"/>
</dbReference>
<dbReference type="Pfam" id="PF00573">
    <property type="entry name" value="Ribosomal_L4"/>
    <property type="match status" value="1"/>
</dbReference>
<dbReference type="SUPFAM" id="SSF52166">
    <property type="entry name" value="Ribosomal protein L4"/>
    <property type="match status" value="1"/>
</dbReference>
<keyword id="KW-0687">Ribonucleoprotein</keyword>
<keyword id="KW-0689">Ribosomal protein</keyword>
<keyword id="KW-0694">RNA-binding</keyword>
<keyword id="KW-0699">rRNA-binding</keyword>
<evidence type="ECO:0000255" key="1">
    <source>
        <dbReference type="HAMAP-Rule" id="MF_01328"/>
    </source>
</evidence>
<evidence type="ECO:0000256" key="2">
    <source>
        <dbReference type="SAM" id="MobiDB-lite"/>
    </source>
</evidence>
<evidence type="ECO:0000305" key="3"/>
<gene>
    <name evidence="1" type="primary">rplD</name>
    <name type="ordered locus">CLL_A0239</name>
</gene>
<protein>
    <recommendedName>
        <fullName evidence="1">Large ribosomal subunit protein uL4</fullName>
    </recommendedName>
    <alternativeName>
        <fullName evidence="3">50S ribosomal protein L4</fullName>
    </alternativeName>
</protein>
<reference key="1">
    <citation type="submission" date="2008-04" db="EMBL/GenBank/DDBJ databases">
        <title>Complete sequence of Clostridium botulinum strain Eklund.</title>
        <authorList>
            <person name="Brinkac L.M."/>
            <person name="Brown J.L."/>
            <person name="Bruce D."/>
            <person name="Detter C."/>
            <person name="Munk C."/>
            <person name="Smith L.A."/>
            <person name="Smith T.J."/>
            <person name="Sutton G."/>
            <person name="Brettin T.S."/>
        </authorList>
    </citation>
    <scope>NUCLEOTIDE SEQUENCE [LARGE SCALE GENOMIC DNA]</scope>
    <source>
        <strain>Eklund 17B / Type B</strain>
    </source>
</reference>
<comment type="function">
    <text evidence="1">One of the primary rRNA binding proteins, this protein initially binds near the 5'-end of the 23S rRNA. It is important during the early stages of 50S assembly. It makes multiple contacts with different domains of the 23S rRNA in the assembled 50S subunit and ribosome.</text>
</comment>
<comment type="function">
    <text evidence="1">Forms part of the polypeptide exit tunnel.</text>
</comment>
<comment type="subunit">
    <text evidence="1">Part of the 50S ribosomal subunit.</text>
</comment>
<comment type="similarity">
    <text evidence="1">Belongs to the universal ribosomal protein uL4 family.</text>
</comment>
<accession>B2TIH6</accession>
<organism>
    <name type="scientific">Clostridium botulinum (strain Eklund 17B / Type B)</name>
    <dbReference type="NCBI Taxonomy" id="935198"/>
    <lineage>
        <taxon>Bacteria</taxon>
        <taxon>Bacillati</taxon>
        <taxon>Bacillota</taxon>
        <taxon>Clostridia</taxon>
        <taxon>Eubacteriales</taxon>
        <taxon>Clostridiaceae</taxon>
        <taxon>Clostridium</taxon>
    </lineage>
</organism>
<sequence length="206" mass="22821">MPTVGLFNQEGKQVGDIQLNANVFEVEVNKHALHQVVVALLANKRQGTQSAKTRTEVRGGGIKPWRQKGTGRARQGSIRAPQWIKGGIVFAPKPRDYRVSIPKSMRRVAMKSALTSKVNDGQMVVLESLSFEAPKTKQFIEMLSAFNAKKTLIITAESNEAVYKSARNIQGVSVIPVNNINVYDLLKFEKLIITKDAVSKIEEVYA</sequence>
<name>RL4_CLOBB</name>
<proteinExistence type="inferred from homology"/>
<feature type="chain" id="PRO_1000142105" description="Large ribosomal subunit protein uL4">
    <location>
        <begin position="1"/>
        <end position="206"/>
    </location>
</feature>
<feature type="region of interest" description="Disordered" evidence="2">
    <location>
        <begin position="49"/>
        <end position="76"/>
    </location>
</feature>